<protein>
    <recommendedName>
        <fullName evidence="1">Urease accessory protein UreE</fullName>
    </recommendedName>
</protein>
<accession>Q9Z3B7</accession>
<proteinExistence type="inferred from homology"/>
<sequence length="163" mass="18172">MIIESISGNIHDLPGEDLEDVHVESVVLPLADLTKRIQRVRSDHGTELGIRLAPGAPDLREGDILLRNERGIVVVRLEPTDVLVIAPVTVREMGVVAHNLGNRHLPAQFFGPAEPFPGLEGHDGVMVIQYDHTAEHYLEHLGVRHARMERSMPVPFRHAEHTH</sequence>
<feature type="chain" id="PRO_0000067626" description="Urease accessory protein UreE">
    <location>
        <begin position="1"/>
        <end position="163"/>
    </location>
</feature>
<gene>
    <name evidence="1" type="primary">ureE</name>
</gene>
<dbReference type="EMBL" id="AF056321">
    <property type="protein sequence ID" value="AAD13733.1"/>
    <property type="molecule type" value="Genomic_DNA"/>
</dbReference>
<dbReference type="EMBL" id="AF048782">
    <property type="protein sequence ID" value="AAD13727.1"/>
    <property type="molecule type" value="Genomic_DNA"/>
</dbReference>
<dbReference type="RefSeq" id="WP_003782027.1">
    <property type="nucleotide sequence ID" value="NZ_MSRR01000006.1"/>
</dbReference>
<dbReference type="SMR" id="Q9Z3B7"/>
<dbReference type="STRING" id="1655.BKH10_09515"/>
<dbReference type="GeneID" id="64257297"/>
<dbReference type="GO" id="GO:0005737">
    <property type="term" value="C:cytoplasm"/>
    <property type="evidence" value="ECO:0007669"/>
    <property type="project" value="UniProtKB-SubCell"/>
</dbReference>
<dbReference type="GO" id="GO:0016151">
    <property type="term" value="F:nickel cation binding"/>
    <property type="evidence" value="ECO:0007669"/>
    <property type="project" value="UniProtKB-UniRule"/>
</dbReference>
<dbReference type="GO" id="GO:0051082">
    <property type="term" value="F:unfolded protein binding"/>
    <property type="evidence" value="ECO:0007669"/>
    <property type="project" value="UniProtKB-UniRule"/>
</dbReference>
<dbReference type="GO" id="GO:0006457">
    <property type="term" value="P:protein folding"/>
    <property type="evidence" value="ECO:0007669"/>
    <property type="project" value="InterPro"/>
</dbReference>
<dbReference type="CDD" id="cd00571">
    <property type="entry name" value="UreE"/>
    <property type="match status" value="1"/>
</dbReference>
<dbReference type="Gene3D" id="2.60.260.20">
    <property type="entry name" value="Urease metallochaperone UreE, N-terminal domain"/>
    <property type="match status" value="1"/>
</dbReference>
<dbReference type="Gene3D" id="3.30.70.790">
    <property type="entry name" value="UreE, C-terminal domain"/>
    <property type="match status" value="1"/>
</dbReference>
<dbReference type="HAMAP" id="MF_00822">
    <property type="entry name" value="UreE"/>
    <property type="match status" value="1"/>
</dbReference>
<dbReference type="InterPro" id="IPR012406">
    <property type="entry name" value="UreE"/>
</dbReference>
<dbReference type="InterPro" id="IPR004029">
    <property type="entry name" value="UreE_N"/>
</dbReference>
<dbReference type="InterPro" id="IPR036118">
    <property type="entry name" value="UreE_N_sf"/>
</dbReference>
<dbReference type="NCBIfam" id="NF009757">
    <property type="entry name" value="PRK13261.2-3"/>
    <property type="match status" value="1"/>
</dbReference>
<dbReference type="Pfam" id="PF02814">
    <property type="entry name" value="UreE_N"/>
    <property type="match status" value="1"/>
</dbReference>
<dbReference type="PIRSF" id="PIRSF036402">
    <property type="entry name" value="Ureas_acces_UreE"/>
    <property type="match status" value="1"/>
</dbReference>
<dbReference type="SMART" id="SM00988">
    <property type="entry name" value="UreE_N"/>
    <property type="match status" value="1"/>
</dbReference>
<dbReference type="SUPFAM" id="SSF69737">
    <property type="entry name" value="Urease metallochaperone UreE, C-terminal domain"/>
    <property type="match status" value="1"/>
</dbReference>
<dbReference type="SUPFAM" id="SSF69287">
    <property type="entry name" value="Urease metallochaperone UreE, N-terminal domain"/>
    <property type="match status" value="1"/>
</dbReference>
<keyword id="KW-0143">Chaperone</keyword>
<keyword id="KW-0963">Cytoplasm</keyword>
<keyword id="KW-0533">Nickel</keyword>
<keyword id="KW-0996">Nickel insertion</keyword>
<evidence type="ECO:0000255" key="1">
    <source>
        <dbReference type="HAMAP-Rule" id="MF_00822"/>
    </source>
</evidence>
<organism>
    <name type="scientific">Actinomyces naeslundii</name>
    <dbReference type="NCBI Taxonomy" id="1655"/>
    <lineage>
        <taxon>Bacteria</taxon>
        <taxon>Bacillati</taxon>
        <taxon>Actinomycetota</taxon>
        <taxon>Actinomycetes</taxon>
        <taxon>Actinomycetales</taxon>
        <taxon>Actinomycetaceae</taxon>
        <taxon>Actinomyces</taxon>
    </lineage>
</organism>
<comment type="function">
    <text evidence="1">Involved in urease metallocenter assembly. Binds nickel. Probably functions as a nickel donor during metallocenter assembly.</text>
</comment>
<comment type="subcellular location">
    <subcellularLocation>
        <location evidence="1">Cytoplasm</location>
    </subcellularLocation>
</comment>
<comment type="similarity">
    <text evidence="1">Belongs to the UreE family.</text>
</comment>
<reference key="1">
    <citation type="journal article" date="1999" name="Infect. Immun.">
        <title>Genetic and physiologic characterization of urease of Actinomyces naeslundii.</title>
        <authorList>
            <person name="Morou-Bermudez E."/>
            <person name="Burne R.A."/>
        </authorList>
    </citation>
    <scope>NUCLEOTIDE SEQUENCE [GENOMIC DNA]</scope>
    <source>
        <strain>WVU45</strain>
    </source>
</reference>
<name>UREE_ACTNA</name>